<protein>
    <recommendedName>
        <fullName>Lithostathine</fullName>
    </recommendedName>
    <alternativeName>
        <fullName>Islet cells regeneration factor</fullName>
        <shortName>ICRF</shortName>
    </alternativeName>
    <alternativeName>
        <fullName>Islet of Langerhans regenerating protein</fullName>
        <shortName>REG</shortName>
    </alternativeName>
    <alternativeName>
        <fullName>Pancreatic stone protein</fullName>
        <shortName>PSP</shortName>
    </alternativeName>
    <alternativeName>
        <fullName>Pancreatic thread protein</fullName>
        <shortName>PTP</shortName>
    </alternativeName>
</protein>
<name>LITH_RAT</name>
<sequence length="165" mass="18672">MTRNKYFILLSCLMVLSPSQGQEAEEDLPSARITCPEGSNAYSSYCYYFMEDHLSWAEADLFCQNMNSGYLVSVLSQAEGNFLASLIKESGTTAANVWIGLHDPKNNRRWHWSSGSLFLYKSWDTGYPNNSNRGYCVSVTSNSGYKKWRDNSCDAQLSFVCKFKA</sequence>
<proteinExistence type="evidence at protein level"/>
<comment type="function">
    <text>Might act as an inhibitor of spontaneous calcium carbonate precipitation.</text>
</comment>
<comment type="subcellular location">
    <subcellularLocation>
        <location>Secreted</location>
    </subcellularLocation>
</comment>
<comment type="tissue specificity">
    <text>Expressed only in regenerating islets, but not in normal pancreatic islets, insulinomas or regenerating liver.</text>
</comment>
<keyword id="KW-0903">Direct protein sequencing</keyword>
<keyword id="KW-1015">Disulfide bond</keyword>
<keyword id="KW-0325">Glycoprotein</keyword>
<keyword id="KW-0430">Lectin</keyword>
<keyword id="KW-0873">Pyrrolidone carboxylic acid</keyword>
<keyword id="KW-1185">Reference proteome</keyword>
<keyword id="KW-0964">Secreted</keyword>
<keyword id="KW-0732">Signal</keyword>
<feature type="signal peptide" evidence="4">
    <location>
        <begin position="1"/>
        <end position="21"/>
    </location>
</feature>
<feature type="chain" id="PRO_0000017428" description="Lithostathine">
    <location>
        <begin position="22"/>
        <end position="165"/>
    </location>
</feature>
<feature type="domain" description="C-type lectin" evidence="3">
    <location>
        <begin position="33"/>
        <end position="163"/>
    </location>
</feature>
<feature type="modified residue" description="Pyrrolidone carboxylic acid" evidence="1">
    <location>
        <position position="22"/>
    </location>
</feature>
<feature type="glycosylation site" description="N-linked (GlcNAc...) asparagine" evidence="2">
    <location>
        <position position="129"/>
    </location>
</feature>
<feature type="disulfide bond" evidence="3">
    <location>
        <begin position="35"/>
        <end position="46"/>
    </location>
</feature>
<feature type="disulfide bond" evidence="3">
    <location>
        <begin position="63"/>
        <end position="161"/>
    </location>
</feature>
<feature type="disulfide bond" evidence="3">
    <location>
        <begin position="136"/>
        <end position="153"/>
    </location>
</feature>
<dbReference type="EMBL" id="L07512">
    <property type="protein sequence ID" value="AAA41533.1"/>
    <property type="molecule type" value="Genomic_DNA"/>
</dbReference>
<dbReference type="EMBL" id="M62930">
    <property type="protein sequence ID" value="AAA41974.1"/>
    <property type="molecule type" value="mRNA"/>
</dbReference>
<dbReference type="EMBL" id="M18962">
    <property type="protein sequence ID" value="AAA42028.1"/>
    <property type="molecule type" value="mRNA"/>
</dbReference>
<dbReference type="EMBL" id="D26164">
    <property type="protein sequence ID" value="BAA05149.1"/>
    <property type="molecule type" value="Genomic_DNA"/>
</dbReference>
<dbReference type="PIR" id="A28351">
    <property type="entry name" value="A28351"/>
</dbReference>
<dbReference type="RefSeq" id="NP_036773.1">
    <property type="nucleotide sequence ID" value="NM_012641.1"/>
</dbReference>
<dbReference type="SMR" id="P10758"/>
<dbReference type="FunCoup" id="P10758">
    <property type="interactions" value="10"/>
</dbReference>
<dbReference type="STRING" id="10116.ENSRNOP00000054678"/>
<dbReference type="MEROPS" id="I63.002"/>
<dbReference type="GlyCosmos" id="P10758">
    <property type="glycosylation" value="1 site, No reported glycans"/>
</dbReference>
<dbReference type="GlyGen" id="P10758">
    <property type="glycosylation" value="1 site"/>
</dbReference>
<dbReference type="PhosphoSitePlus" id="P10758"/>
<dbReference type="PaxDb" id="10116-ENSRNOP00000054678"/>
<dbReference type="Ensembl" id="ENSRNOT00000057869.6">
    <property type="protein sequence ID" value="ENSRNOP00000054678.2"/>
    <property type="gene ID" value="ENSRNOG00000006486.9"/>
</dbReference>
<dbReference type="GeneID" id="24714"/>
<dbReference type="KEGG" id="rno:24714"/>
<dbReference type="UCSC" id="RGD:3552">
    <property type="organism name" value="rat"/>
</dbReference>
<dbReference type="AGR" id="RGD:3552"/>
<dbReference type="CTD" id="5967"/>
<dbReference type="RGD" id="3552">
    <property type="gene designation" value="Reg1"/>
</dbReference>
<dbReference type="eggNOG" id="KOG4297">
    <property type="taxonomic scope" value="Eukaryota"/>
</dbReference>
<dbReference type="GeneTree" id="ENSGT00940000162393"/>
<dbReference type="HOGENOM" id="CLU_049894_18_0_1"/>
<dbReference type="InParanoid" id="P10758"/>
<dbReference type="OMA" id="CYYFMED"/>
<dbReference type="OrthoDB" id="441660at2759"/>
<dbReference type="PhylomeDB" id="P10758"/>
<dbReference type="PRO" id="PR:P10758"/>
<dbReference type="Proteomes" id="UP000002494">
    <property type="component" value="Chromosome 4"/>
</dbReference>
<dbReference type="Bgee" id="ENSRNOG00000006486">
    <property type="expression patterns" value="Expressed in pancreas and 10 other cell types or tissues"/>
</dbReference>
<dbReference type="GO" id="GO:0045178">
    <property type="term" value="C:basal part of cell"/>
    <property type="evidence" value="ECO:0000314"/>
    <property type="project" value="RGD"/>
</dbReference>
<dbReference type="GO" id="GO:0032590">
    <property type="term" value="C:dendrite membrane"/>
    <property type="evidence" value="ECO:0000314"/>
    <property type="project" value="RGD"/>
</dbReference>
<dbReference type="GO" id="GO:0005615">
    <property type="term" value="C:extracellular space"/>
    <property type="evidence" value="ECO:0000314"/>
    <property type="project" value="RGD"/>
</dbReference>
<dbReference type="GO" id="GO:0030426">
    <property type="term" value="C:growth cone"/>
    <property type="evidence" value="ECO:0000314"/>
    <property type="project" value="RGD"/>
</dbReference>
<dbReference type="GO" id="GO:0032809">
    <property type="term" value="C:neuronal cell body membrane"/>
    <property type="evidence" value="ECO:0000314"/>
    <property type="project" value="RGD"/>
</dbReference>
<dbReference type="GO" id="GO:0048471">
    <property type="term" value="C:perinuclear region of cytoplasm"/>
    <property type="evidence" value="ECO:0000314"/>
    <property type="project" value="RGD"/>
</dbReference>
<dbReference type="GO" id="GO:0032991">
    <property type="term" value="C:protein-containing complex"/>
    <property type="evidence" value="ECO:0000314"/>
    <property type="project" value="RGD"/>
</dbReference>
<dbReference type="GO" id="GO:0042588">
    <property type="term" value="C:zymogen granule"/>
    <property type="evidence" value="ECO:0000314"/>
    <property type="project" value="RGD"/>
</dbReference>
<dbReference type="GO" id="GO:0008083">
    <property type="term" value="F:growth factor activity"/>
    <property type="evidence" value="ECO:0000314"/>
    <property type="project" value="MGI"/>
</dbReference>
<dbReference type="GO" id="GO:0042802">
    <property type="term" value="F:identical protein binding"/>
    <property type="evidence" value="ECO:0000353"/>
    <property type="project" value="RGD"/>
</dbReference>
<dbReference type="GO" id="GO:0140678">
    <property type="term" value="F:molecular function inhibitor activity"/>
    <property type="evidence" value="ECO:0000266"/>
    <property type="project" value="RGD"/>
</dbReference>
<dbReference type="GO" id="GO:0070492">
    <property type="term" value="F:oligosaccharide binding"/>
    <property type="evidence" value="ECO:0000318"/>
    <property type="project" value="GO_Central"/>
</dbReference>
<dbReference type="GO" id="GO:0042834">
    <property type="term" value="F:peptidoglycan binding"/>
    <property type="evidence" value="ECO:0000318"/>
    <property type="project" value="GO_Central"/>
</dbReference>
<dbReference type="GO" id="GO:0019902">
    <property type="term" value="F:phosphatase binding"/>
    <property type="evidence" value="ECO:0000353"/>
    <property type="project" value="RGD"/>
</dbReference>
<dbReference type="GO" id="GO:0019903">
    <property type="term" value="F:protein phosphatase binding"/>
    <property type="evidence" value="ECO:0000353"/>
    <property type="project" value="RGD"/>
</dbReference>
<dbReference type="GO" id="GO:0038023">
    <property type="term" value="F:signaling receptor activity"/>
    <property type="evidence" value="ECO:0000318"/>
    <property type="project" value="GO_Central"/>
</dbReference>
<dbReference type="GO" id="GO:0005102">
    <property type="term" value="F:signaling receptor binding"/>
    <property type="evidence" value="ECO:0000353"/>
    <property type="project" value="RGD"/>
</dbReference>
<dbReference type="GO" id="GO:0061844">
    <property type="term" value="P:antimicrobial humoral immune response mediated by antimicrobial peptide"/>
    <property type="evidence" value="ECO:0000318"/>
    <property type="project" value="GO_Central"/>
</dbReference>
<dbReference type="GO" id="GO:1990869">
    <property type="term" value="P:cellular response to chemokine"/>
    <property type="evidence" value="ECO:0000270"/>
    <property type="project" value="RGD"/>
</dbReference>
<dbReference type="GO" id="GO:1990878">
    <property type="term" value="P:cellular response to gastrin"/>
    <property type="evidence" value="ECO:0000270"/>
    <property type="project" value="RGD"/>
</dbReference>
<dbReference type="GO" id="GO:0010467">
    <property type="term" value="P:gene expression"/>
    <property type="evidence" value="ECO:0000266"/>
    <property type="project" value="RGD"/>
</dbReference>
<dbReference type="GO" id="GO:0097421">
    <property type="term" value="P:liver regeneration"/>
    <property type="evidence" value="ECO:0000270"/>
    <property type="project" value="RGD"/>
</dbReference>
<dbReference type="GO" id="GO:0007494">
    <property type="term" value="P:midgut development"/>
    <property type="evidence" value="ECO:0000270"/>
    <property type="project" value="RGD"/>
</dbReference>
<dbReference type="GO" id="GO:0008285">
    <property type="term" value="P:negative regulation of cell population proliferation"/>
    <property type="evidence" value="ECO:0000315"/>
    <property type="project" value="RGD"/>
</dbReference>
<dbReference type="GO" id="GO:1990798">
    <property type="term" value="P:pancreas regeneration"/>
    <property type="evidence" value="ECO:0000270"/>
    <property type="project" value="RGD"/>
</dbReference>
<dbReference type="GO" id="GO:0043491">
    <property type="term" value="P:phosphatidylinositol 3-kinase/protein kinase B signal transduction"/>
    <property type="evidence" value="ECO:0000266"/>
    <property type="project" value="RGD"/>
</dbReference>
<dbReference type="GO" id="GO:1904699">
    <property type="term" value="P:positive regulation of acinar cell proliferation"/>
    <property type="evidence" value="ECO:0000314"/>
    <property type="project" value="RGD"/>
</dbReference>
<dbReference type="GO" id="GO:0008284">
    <property type="term" value="P:positive regulation of cell population proliferation"/>
    <property type="evidence" value="ECO:0000318"/>
    <property type="project" value="GO_Central"/>
</dbReference>
<dbReference type="GO" id="GO:1903861">
    <property type="term" value="P:positive regulation of dendrite extension"/>
    <property type="evidence" value="ECO:0000315"/>
    <property type="project" value="RGD"/>
</dbReference>
<dbReference type="GO" id="GO:0010628">
    <property type="term" value="P:positive regulation of gene expression"/>
    <property type="evidence" value="ECO:0000314"/>
    <property type="project" value="RGD"/>
</dbReference>
<dbReference type="GO" id="GO:1904692">
    <property type="term" value="P:positive regulation of type B pancreatic cell proliferation"/>
    <property type="evidence" value="ECO:0000315"/>
    <property type="project" value="RGD"/>
</dbReference>
<dbReference type="GO" id="GO:1990867">
    <property type="term" value="P:response to gastrin"/>
    <property type="evidence" value="ECO:0000270"/>
    <property type="project" value="RGD"/>
</dbReference>
<dbReference type="GO" id="GO:1990864">
    <property type="term" value="P:response to growth hormone-releasing hormone"/>
    <property type="evidence" value="ECO:0000270"/>
    <property type="project" value="RGD"/>
</dbReference>
<dbReference type="GO" id="GO:0001666">
    <property type="term" value="P:response to hypoxia"/>
    <property type="evidence" value="ECO:0000270"/>
    <property type="project" value="RGD"/>
</dbReference>
<dbReference type="GO" id="GO:0031667">
    <property type="term" value="P:response to nutrient levels"/>
    <property type="evidence" value="ECO:0000270"/>
    <property type="project" value="RGD"/>
</dbReference>
<dbReference type="GO" id="GO:0043434">
    <property type="term" value="P:response to peptide hormone"/>
    <property type="evidence" value="ECO:0000318"/>
    <property type="project" value="GO_Central"/>
</dbReference>
<dbReference type="GO" id="GO:1990785">
    <property type="term" value="P:response to water-immersion restraint stress"/>
    <property type="evidence" value="ECO:0000270"/>
    <property type="project" value="RGD"/>
</dbReference>
<dbReference type="GO" id="GO:0003309">
    <property type="term" value="P:type B pancreatic cell differentiation"/>
    <property type="evidence" value="ECO:0000266"/>
    <property type="project" value="RGD"/>
</dbReference>
<dbReference type="FunFam" id="3.10.100.10:FF:000059">
    <property type="entry name" value="Regenerating islet-derived 1"/>
    <property type="match status" value="1"/>
</dbReference>
<dbReference type="Gene3D" id="3.10.100.10">
    <property type="entry name" value="Mannose-Binding Protein A, subunit A"/>
    <property type="match status" value="1"/>
</dbReference>
<dbReference type="InterPro" id="IPR001304">
    <property type="entry name" value="C-type_lectin-like"/>
</dbReference>
<dbReference type="InterPro" id="IPR016186">
    <property type="entry name" value="C-type_lectin-like/link_sf"/>
</dbReference>
<dbReference type="InterPro" id="IPR050111">
    <property type="entry name" value="C-type_lectin/snaclec_domain"/>
</dbReference>
<dbReference type="InterPro" id="IPR018378">
    <property type="entry name" value="C-type_lectin_CS"/>
</dbReference>
<dbReference type="InterPro" id="IPR016187">
    <property type="entry name" value="CTDL_fold"/>
</dbReference>
<dbReference type="PANTHER" id="PTHR22803">
    <property type="entry name" value="MANNOSE, PHOSPHOLIPASE, LECTIN RECEPTOR RELATED"/>
    <property type="match status" value="1"/>
</dbReference>
<dbReference type="Pfam" id="PF00059">
    <property type="entry name" value="Lectin_C"/>
    <property type="match status" value="1"/>
</dbReference>
<dbReference type="PRINTS" id="PR01504">
    <property type="entry name" value="PNCREATITSAP"/>
</dbReference>
<dbReference type="SMART" id="SM00034">
    <property type="entry name" value="CLECT"/>
    <property type="match status" value="1"/>
</dbReference>
<dbReference type="SUPFAM" id="SSF56436">
    <property type="entry name" value="C-type lectin-like"/>
    <property type="match status" value="1"/>
</dbReference>
<dbReference type="PROSITE" id="PS00615">
    <property type="entry name" value="C_TYPE_LECTIN_1"/>
    <property type="match status" value="1"/>
</dbReference>
<dbReference type="PROSITE" id="PS50041">
    <property type="entry name" value="C_TYPE_LECTIN_2"/>
    <property type="match status" value="1"/>
</dbReference>
<accession>P10758</accession>
<gene>
    <name type="primary">Reg1</name>
    <name type="synonym">Reg</name>
</gene>
<reference key="1">
    <citation type="journal article" date="1991" name="J. Biol. Chem.">
        <title>Rat pancreatic stone protein messenger RNA. Abundant expression in mature exocrine cells, regulation by food content, and sequence identity with the endocrine reg transcript.</title>
        <authorList>
            <person name="Rouquier S."/>
            <person name="Verdier J.-M."/>
            <person name="Iovanna J."/>
            <person name="Dagorn J.-C."/>
            <person name="Giorgi D."/>
        </authorList>
    </citation>
    <scope>NUCLEOTIDE SEQUENCE [MRNA]</scope>
</reference>
<reference key="2">
    <citation type="journal article" date="1988" name="J. Biol. Chem.">
        <title>A novel gene activated in regenerating islets.</title>
        <authorList>
            <person name="Terazono K."/>
            <person name="Yamamoto H."/>
            <person name="Takasawa S."/>
            <person name="Shiga K."/>
            <person name="Yonemura Y."/>
            <person name="Tochino Y."/>
            <person name="Okamoto H."/>
        </authorList>
    </citation>
    <scope>NUCLEOTIDE SEQUENCE [MRNA]</scope>
</reference>
<reference key="3">
    <citation type="journal article" date="1993" name="Biochim. Biophys. Acta">
        <title>Rapid PCR cloning and sequence determination of the rat lithostathine gene.</title>
        <authorList>
            <person name="Dusetti N.J."/>
            <person name="Frigerio J.-M."/>
            <person name="Dagorn J.-C."/>
            <person name="Iovanna J.L."/>
        </authorList>
    </citation>
    <scope>NUCLEOTIDE SEQUENCE [GENOMIC DNA]</scope>
</reference>
<reference key="4">
    <citation type="journal article" date="1993" name="Seikagaku">
        <title>Structure and characterization of rat Reg I gene.</title>
        <authorList>
            <person name="Miyashita H."/>
            <person name="Suzuki Y."/>
            <person name="Watanabe T."/>
            <person name="Unno M."/>
            <person name="Moriizumi S."/>
            <person name="Yonekura H."/>
            <person name="Okamoto H."/>
        </authorList>
    </citation>
    <scope>NUCLEOTIDE SEQUENCE</scope>
    <source>
        <strain>Wistar</strain>
    </source>
</reference>
<reference key="5">
    <citation type="journal article" date="1989" name="Comp. Biochem. Physiol.">
        <title>Characterization in rat pancreatic juice of a protein homologous to the human pancreatic stone protein.</title>
        <authorList>
            <person name="Adrich Z."/>
            <person name="de Caro A.M."/>
            <person name="Guidoni A.A."/>
            <person name="Woudstra M.E."/>
            <person name="Rovery M."/>
        </authorList>
    </citation>
    <scope>PROTEIN SEQUENCE OF 22-69</scope>
    <source>
        <tissue>Pancreas</tissue>
    </source>
</reference>
<evidence type="ECO:0000250" key="1">
    <source>
        <dbReference type="UniProtKB" id="P05451"/>
    </source>
</evidence>
<evidence type="ECO:0000255" key="2"/>
<evidence type="ECO:0000255" key="3">
    <source>
        <dbReference type="PROSITE-ProRule" id="PRU00040"/>
    </source>
</evidence>
<evidence type="ECO:0000269" key="4">
    <source>
    </source>
</evidence>
<organism>
    <name type="scientific">Rattus norvegicus</name>
    <name type="common">Rat</name>
    <dbReference type="NCBI Taxonomy" id="10116"/>
    <lineage>
        <taxon>Eukaryota</taxon>
        <taxon>Metazoa</taxon>
        <taxon>Chordata</taxon>
        <taxon>Craniata</taxon>
        <taxon>Vertebrata</taxon>
        <taxon>Euteleostomi</taxon>
        <taxon>Mammalia</taxon>
        <taxon>Eutheria</taxon>
        <taxon>Euarchontoglires</taxon>
        <taxon>Glires</taxon>
        <taxon>Rodentia</taxon>
        <taxon>Myomorpha</taxon>
        <taxon>Muroidea</taxon>
        <taxon>Muridae</taxon>
        <taxon>Murinae</taxon>
        <taxon>Rattus</taxon>
    </lineage>
</organism>